<accession>A0A0G3F8Z3</accession>
<reference key="1">
    <citation type="journal article" date="2015" name="Sci. Rep.">
        <title>Omega-Tbo-IT1-new inhibitor of insect calcium channels isolated from spider venom.</title>
        <authorList>
            <person name="Mikov A.N."/>
            <person name="Fedorova I.M."/>
            <person name="Potapieva N.N."/>
            <person name="Maleeva E.E."/>
            <person name="Andreev Y.A."/>
            <person name="Zaitsev A.V."/>
            <person name="Kim K.K."/>
            <person name="Bocharov E.V."/>
            <person name="Bozin T.N."/>
            <person name="Altukhov D.A."/>
            <person name="Lipkin A.V."/>
            <person name="Kozlov S.A."/>
            <person name="Tikhonov D.B."/>
            <person name="Grishin E.V."/>
        </authorList>
    </citation>
    <scope>NUCLEOTIDE SEQUENCE [MRNA]</scope>
    <scope>PROTEIN SEQUENCE OF 39-50</scope>
    <scope>MASS SPECTROMETRY</scope>
    <scope>STRUCTURE BY NMR OF 39-79</scope>
    <scope>DISULFIDE BONDS</scope>
    <scope>SUBCELLULAR LOCATION</scope>
    <scope>RECOMBINANT EXPRESSION</scope>
    <source>
        <tissue>Venom</tissue>
        <tissue>Venom gland</tissue>
    </source>
</reference>
<reference key="2">
    <citation type="journal article" date="2021" name="Toxins">
        <title>New Insectotoxin from Tibellus Oblongus Spider Venom Presents Novel Adaptation of ICK Fold.</title>
        <authorList>
            <person name="Korolkova Y."/>
            <person name="Maleeva E."/>
            <person name="Mikov A."/>
            <person name="Lobas A."/>
            <person name="Solovyeva E."/>
            <person name="Gorshkov M."/>
            <person name="Andreev Y."/>
            <person name="Peigneur S."/>
            <person name="Tytgat J."/>
            <person name="Kornilov F."/>
            <person name="Lushpa V."/>
            <person name="Mineev K."/>
            <person name="Kozlov S."/>
        </authorList>
    </citation>
    <scope>TOXIC DOSE</scope>
</reference>
<organism>
    <name type="scientific">Tibellus oblongus</name>
    <name type="common">Oblong running crab spider</name>
    <dbReference type="NCBI Taxonomy" id="336685"/>
    <lineage>
        <taxon>Eukaryota</taxon>
        <taxon>Metazoa</taxon>
        <taxon>Ecdysozoa</taxon>
        <taxon>Arthropoda</taxon>
        <taxon>Chelicerata</taxon>
        <taxon>Arachnida</taxon>
        <taxon>Araneae</taxon>
        <taxon>Araneomorphae</taxon>
        <taxon>Entelegynae</taxon>
        <taxon>Dionycha</taxon>
        <taxon>Philodromidae</taxon>
        <taxon>Tibellus</taxon>
    </lineage>
</organism>
<name>TBO1_TIBOB</name>
<feature type="signal peptide" evidence="1">
    <location>
        <begin position="1"/>
        <end position="21"/>
    </location>
</feature>
<feature type="propeptide" id="PRO_0000443393" evidence="6">
    <location>
        <begin position="22"/>
        <end position="38"/>
    </location>
</feature>
<feature type="chain" id="PRO_5005184403" description="Omega-phylotoxin-To1a" evidence="6">
    <location>
        <begin position="39"/>
        <end position="79"/>
    </location>
</feature>
<feature type="disulfide bond" evidence="2 7">
    <location>
        <begin position="39"/>
        <end position="59"/>
    </location>
</feature>
<feature type="disulfide bond" evidence="2 7">
    <location>
        <begin position="46"/>
        <end position="63"/>
    </location>
</feature>
<feature type="disulfide bond" evidence="2 7">
    <location>
        <begin position="58"/>
        <end position="78"/>
    </location>
</feature>
<feature type="disulfide bond" evidence="2 7">
    <location>
        <begin position="65"/>
        <end position="76"/>
    </location>
</feature>
<feature type="helix" evidence="8">
    <location>
        <begin position="49"/>
        <end position="51"/>
    </location>
</feature>
<feature type="strand" evidence="8">
    <location>
        <begin position="58"/>
        <end position="68"/>
    </location>
</feature>
<feature type="turn" evidence="8">
    <location>
        <begin position="69"/>
        <end position="71"/>
    </location>
</feature>
<feature type="strand" evidence="8">
    <location>
        <begin position="72"/>
        <end position="79"/>
    </location>
</feature>
<sequence>MKKTFCFILILVCIVLKSVNAEEEDNFEESSLEMETARCASKNERCGNALYGTKGPGCCNGKCICRTVPRKGVNSCRCM</sequence>
<keyword id="KW-0002">3D-structure</keyword>
<keyword id="KW-0108">Calcium channel impairing toxin</keyword>
<keyword id="KW-0903">Direct protein sequencing</keyword>
<keyword id="KW-1015">Disulfide bond</keyword>
<keyword id="KW-0872">Ion channel impairing toxin</keyword>
<keyword id="KW-0960">Knottin</keyword>
<keyword id="KW-0528">Neurotoxin</keyword>
<keyword id="KW-0638">Presynaptic neurotoxin</keyword>
<keyword id="KW-0964">Secreted</keyword>
<keyword id="KW-0732">Signal</keyword>
<keyword id="KW-0800">Toxin</keyword>
<keyword id="KW-1218">Voltage-gated calcium channel impairing toxin</keyword>
<protein>
    <recommendedName>
        <fullName evidence="4">Omega-phylotoxin-To1a</fullName>
        <shortName evidence="5">Omega-PHTX-To1a</shortName>
    </recommendedName>
    <alternativeName>
        <fullName evidence="4">Omega-Tbo-IT1</fullName>
    </alternativeName>
</protein>
<evidence type="ECO:0000255" key="1"/>
<evidence type="ECO:0000269" key="2">
    <source>
    </source>
</evidence>
<evidence type="ECO:0000269" key="3">
    <source>
    </source>
</evidence>
<evidence type="ECO:0000303" key="4">
    <source>
    </source>
</evidence>
<evidence type="ECO:0000305" key="5"/>
<evidence type="ECO:0000305" key="6">
    <source>
    </source>
</evidence>
<evidence type="ECO:0007744" key="7">
    <source>
        <dbReference type="PDB" id="2MYH"/>
    </source>
</evidence>
<evidence type="ECO:0007829" key="8">
    <source>
        <dbReference type="PDB" id="2MYH"/>
    </source>
</evidence>
<proteinExistence type="evidence at protein level"/>
<comment type="function">
    <text evidence="2">Insect-specific toxin that probably acts as an inhibitor of presynaptic insect calcium channels, presumably Cav2 subtype. In vivo, induces immediate paralysis on insects, followed by death when high doses are injected.</text>
</comment>
<comment type="subcellular location">
    <subcellularLocation>
        <location evidence="2">Secreted</location>
    </subcellularLocation>
</comment>
<comment type="tissue specificity">
    <text evidence="6">Expressed by the venom duct.</text>
</comment>
<comment type="domain">
    <text evidence="2">Adopts an inhibitor cystine knot (ICK) fold. Is defined as a knottin (one disulfide bond crosses the macrocycle formed by two other disulfide bonds).</text>
</comment>
<comment type="domain">
    <text evidence="5">The presence of a 'disulfide through disulfide knot' structurally defines this protein as a knottin.</text>
</comment>
<comment type="mass spectrometry"/>
<comment type="toxic dose">
    <text evidence="2">LD(50) is 19 ug/g on fly larvae (M.domestica) (4.4 nmol/g of body weight).</text>
</comment>
<comment type="toxic dose">
    <text evidence="2">LD(50) is 20 ug/g on juvenile cockroaches (G.portentosa).</text>
</comment>
<comment type="toxic dose">
    <text evidence="3">LD(100) is 100 ug/g when tested on larvae of the housefly Musca domestica.</text>
</comment>
<comment type="miscellaneous">
    <text evidence="2">Negative results: does not affect frog neuromuscular junctions and glutamatergic and GABAergic transmission in rat brains.</text>
</comment>
<dbReference type="EMBL" id="KP308197">
    <property type="protein sequence ID" value="AKJ77984.1"/>
    <property type="molecule type" value="mRNA"/>
</dbReference>
<dbReference type="PDB" id="2MYH">
    <property type="method" value="NMR"/>
    <property type="chains" value="A=39-79"/>
</dbReference>
<dbReference type="PDBsum" id="2MYH"/>
<dbReference type="SMR" id="A0A0G3F8Z3"/>
<dbReference type="GO" id="GO:0005576">
    <property type="term" value="C:extracellular region"/>
    <property type="evidence" value="ECO:0007669"/>
    <property type="project" value="UniProtKB-SubCell"/>
</dbReference>
<dbReference type="GO" id="GO:0044231">
    <property type="term" value="C:host cell presynaptic membrane"/>
    <property type="evidence" value="ECO:0007669"/>
    <property type="project" value="UniProtKB-KW"/>
</dbReference>
<dbReference type="GO" id="GO:0005246">
    <property type="term" value="F:calcium channel regulator activity"/>
    <property type="evidence" value="ECO:0007669"/>
    <property type="project" value="UniProtKB-KW"/>
</dbReference>
<dbReference type="GO" id="GO:0090729">
    <property type="term" value="F:toxin activity"/>
    <property type="evidence" value="ECO:0007669"/>
    <property type="project" value="UniProtKB-KW"/>
</dbReference>